<reference key="1">
    <citation type="journal article" date="2001" name="Science">
        <title>Complete genome sequence of a virulent isolate of Streptococcus pneumoniae.</title>
        <authorList>
            <person name="Tettelin H."/>
            <person name="Nelson K.E."/>
            <person name="Paulsen I.T."/>
            <person name="Eisen J.A."/>
            <person name="Read T.D."/>
            <person name="Peterson S.N."/>
            <person name="Heidelberg J.F."/>
            <person name="DeBoy R.T."/>
            <person name="Haft D.H."/>
            <person name="Dodson R.J."/>
            <person name="Durkin A.S."/>
            <person name="Gwinn M.L."/>
            <person name="Kolonay J.F."/>
            <person name="Nelson W.C."/>
            <person name="Peterson J.D."/>
            <person name="Umayam L.A."/>
            <person name="White O."/>
            <person name="Salzberg S.L."/>
            <person name="Lewis M.R."/>
            <person name="Radune D."/>
            <person name="Holtzapple E.K."/>
            <person name="Khouri H.M."/>
            <person name="Wolf A.M."/>
            <person name="Utterback T.R."/>
            <person name="Hansen C.L."/>
            <person name="McDonald L.A."/>
            <person name="Feldblyum T.V."/>
            <person name="Angiuoli S.V."/>
            <person name="Dickinson T."/>
            <person name="Hickey E.K."/>
            <person name="Holt I.E."/>
            <person name="Loftus B.J."/>
            <person name="Yang F."/>
            <person name="Smith H.O."/>
            <person name="Venter J.C."/>
            <person name="Dougherty B.A."/>
            <person name="Morrison D.A."/>
            <person name="Hollingshead S.K."/>
            <person name="Fraser C.M."/>
        </authorList>
    </citation>
    <scope>NUCLEOTIDE SEQUENCE [LARGE SCALE GENOMIC DNA]</scope>
    <source>
        <strain>ATCC BAA-334 / TIGR4</strain>
    </source>
</reference>
<protein>
    <recommendedName>
        <fullName evidence="1">Ribonuclease P protein component</fullName>
        <shortName evidence="1">RNase P protein</shortName>
        <shortName evidence="1">RNaseP protein</shortName>
        <ecNumber evidence="1">3.1.26.5</ecNumber>
    </recommendedName>
    <alternativeName>
        <fullName evidence="1">Protein C5</fullName>
    </alternativeName>
</protein>
<accession>Q97NI5</accession>
<name>RNPA_STRPN</name>
<comment type="function">
    <text evidence="1">RNaseP catalyzes the removal of the 5'-leader sequence from pre-tRNA to produce the mature 5'-terminus. It can also cleave other RNA substrates such as 4.5S RNA. The protein component plays an auxiliary but essential role in vivo by binding to the 5'-leader sequence and broadening the substrate specificity of the ribozyme.</text>
</comment>
<comment type="catalytic activity">
    <reaction evidence="1">
        <text>Endonucleolytic cleavage of RNA, removing 5'-extranucleotides from tRNA precursor.</text>
        <dbReference type="EC" id="3.1.26.5"/>
    </reaction>
</comment>
<comment type="subunit">
    <text evidence="1">Consists of a catalytic RNA component (M1 or rnpB) and a protein subunit.</text>
</comment>
<comment type="similarity">
    <text evidence="1">Belongs to the RnpA family.</text>
</comment>
<gene>
    <name evidence="1" type="primary">rnpA</name>
    <name type="ordered locus">SP_2042</name>
</gene>
<proteinExistence type="inferred from homology"/>
<sequence>MKKNFRVKREKDFKAIFKEGTSFANRKFVVYQLENQKNRFRVGLSVSKKLGNAVTRNQIKRRIRHIIQNAKGSLVEDVDFVVIARKGVETLGYAEMEKNLLHVLKLSKIYREGNGSEKETKVD</sequence>
<evidence type="ECO:0000255" key="1">
    <source>
        <dbReference type="HAMAP-Rule" id="MF_00227"/>
    </source>
</evidence>
<feature type="chain" id="PRO_0000198540" description="Ribonuclease P protein component">
    <location>
        <begin position="1"/>
        <end position="123"/>
    </location>
</feature>
<organism>
    <name type="scientific">Streptococcus pneumoniae serotype 4 (strain ATCC BAA-334 / TIGR4)</name>
    <dbReference type="NCBI Taxonomy" id="170187"/>
    <lineage>
        <taxon>Bacteria</taxon>
        <taxon>Bacillati</taxon>
        <taxon>Bacillota</taxon>
        <taxon>Bacilli</taxon>
        <taxon>Lactobacillales</taxon>
        <taxon>Streptococcaceae</taxon>
        <taxon>Streptococcus</taxon>
    </lineage>
</organism>
<dbReference type="EC" id="3.1.26.5" evidence="1"/>
<dbReference type="EMBL" id="AE005672">
    <property type="protein sequence ID" value="AAK76107.1"/>
    <property type="molecule type" value="Genomic_DNA"/>
</dbReference>
<dbReference type="PIR" id="B95239">
    <property type="entry name" value="B95239"/>
</dbReference>
<dbReference type="RefSeq" id="WP_000739253.1">
    <property type="nucleotide sequence ID" value="NZ_CP155539.1"/>
</dbReference>
<dbReference type="SMR" id="Q97NI5"/>
<dbReference type="PaxDb" id="170187-SP_2042"/>
<dbReference type="EnsemblBacteria" id="AAK76107">
    <property type="protein sequence ID" value="AAK76107"/>
    <property type="gene ID" value="SP_2042"/>
</dbReference>
<dbReference type="KEGG" id="spn:SP_2042"/>
<dbReference type="eggNOG" id="COG0594">
    <property type="taxonomic scope" value="Bacteria"/>
</dbReference>
<dbReference type="PhylomeDB" id="Q97NI5"/>
<dbReference type="BioCyc" id="SPNE170187:G1FZB-2112-MONOMER"/>
<dbReference type="Proteomes" id="UP000000585">
    <property type="component" value="Chromosome"/>
</dbReference>
<dbReference type="GO" id="GO:0030677">
    <property type="term" value="C:ribonuclease P complex"/>
    <property type="evidence" value="ECO:0007669"/>
    <property type="project" value="TreeGrafter"/>
</dbReference>
<dbReference type="GO" id="GO:0042781">
    <property type="term" value="F:3'-tRNA processing endoribonuclease activity"/>
    <property type="evidence" value="ECO:0007669"/>
    <property type="project" value="TreeGrafter"/>
</dbReference>
<dbReference type="GO" id="GO:0004526">
    <property type="term" value="F:ribonuclease P activity"/>
    <property type="evidence" value="ECO:0007669"/>
    <property type="project" value="UniProtKB-UniRule"/>
</dbReference>
<dbReference type="GO" id="GO:0000049">
    <property type="term" value="F:tRNA binding"/>
    <property type="evidence" value="ECO:0007669"/>
    <property type="project" value="UniProtKB-UniRule"/>
</dbReference>
<dbReference type="GO" id="GO:0001682">
    <property type="term" value="P:tRNA 5'-leader removal"/>
    <property type="evidence" value="ECO:0007669"/>
    <property type="project" value="UniProtKB-UniRule"/>
</dbReference>
<dbReference type="FunFam" id="3.30.230.10:FF:000021">
    <property type="entry name" value="Ribonuclease P protein component"/>
    <property type="match status" value="1"/>
</dbReference>
<dbReference type="Gene3D" id="3.30.230.10">
    <property type="match status" value="1"/>
</dbReference>
<dbReference type="HAMAP" id="MF_00227">
    <property type="entry name" value="RNase_P"/>
    <property type="match status" value="1"/>
</dbReference>
<dbReference type="InterPro" id="IPR020568">
    <property type="entry name" value="Ribosomal_Su5_D2-typ_SF"/>
</dbReference>
<dbReference type="InterPro" id="IPR014721">
    <property type="entry name" value="Ribsml_uS5_D2-typ_fold_subgr"/>
</dbReference>
<dbReference type="InterPro" id="IPR000100">
    <property type="entry name" value="RNase_P"/>
</dbReference>
<dbReference type="InterPro" id="IPR020539">
    <property type="entry name" value="RNase_P_CS"/>
</dbReference>
<dbReference type="NCBIfam" id="TIGR00188">
    <property type="entry name" value="rnpA"/>
    <property type="match status" value="1"/>
</dbReference>
<dbReference type="PANTHER" id="PTHR33992">
    <property type="entry name" value="RIBONUCLEASE P PROTEIN COMPONENT"/>
    <property type="match status" value="1"/>
</dbReference>
<dbReference type="PANTHER" id="PTHR33992:SF1">
    <property type="entry name" value="RIBONUCLEASE P PROTEIN COMPONENT"/>
    <property type="match status" value="1"/>
</dbReference>
<dbReference type="Pfam" id="PF00825">
    <property type="entry name" value="Ribonuclease_P"/>
    <property type="match status" value="1"/>
</dbReference>
<dbReference type="SUPFAM" id="SSF54211">
    <property type="entry name" value="Ribosomal protein S5 domain 2-like"/>
    <property type="match status" value="1"/>
</dbReference>
<dbReference type="PROSITE" id="PS00648">
    <property type="entry name" value="RIBONUCLEASE_P"/>
    <property type="match status" value="1"/>
</dbReference>
<keyword id="KW-0255">Endonuclease</keyword>
<keyword id="KW-0378">Hydrolase</keyword>
<keyword id="KW-0540">Nuclease</keyword>
<keyword id="KW-1185">Reference proteome</keyword>
<keyword id="KW-0694">RNA-binding</keyword>
<keyword id="KW-0819">tRNA processing</keyword>